<organism>
    <name type="scientific">Nitrobacter winogradskyi (strain ATCC 25391 / DSM 10237 / CIP 104748 / NCIMB 11846 / Nb-255)</name>
    <dbReference type="NCBI Taxonomy" id="323098"/>
    <lineage>
        <taxon>Bacteria</taxon>
        <taxon>Pseudomonadati</taxon>
        <taxon>Pseudomonadota</taxon>
        <taxon>Alphaproteobacteria</taxon>
        <taxon>Hyphomicrobiales</taxon>
        <taxon>Nitrobacteraceae</taxon>
        <taxon>Nitrobacter</taxon>
    </lineage>
</organism>
<accession>Q3SRY8</accession>
<sequence length="79" mass="9067">MADAGARRPFFRRRKTCPFTGANAPKIDYKDSKLLMRYVSERGKIVPSRITAVSAKKQRELARAVKRARFLGLLPYVIR</sequence>
<keyword id="KW-1185">Reference proteome</keyword>
<keyword id="KW-0687">Ribonucleoprotein</keyword>
<keyword id="KW-0689">Ribosomal protein</keyword>
<keyword id="KW-0694">RNA-binding</keyword>
<keyword id="KW-0699">rRNA-binding</keyword>
<protein>
    <recommendedName>
        <fullName evidence="1">Small ribosomal subunit protein bS18</fullName>
    </recommendedName>
    <alternativeName>
        <fullName evidence="2">30S ribosomal protein S18</fullName>
    </alternativeName>
</protein>
<dbReference type="EMBL" id="CP000115">
    <property type="protein sequence ID" value="ABA04953.1"/>
    <property type="molecule type" value="Genomic_DNA"/>
</dbReference>
<dbReference type="RefSeq" id="WP_011314951.1">
    <property type="nucleotide sequence ID" value="NC_007406.1"/>
</dbReference>
<dbReference type="SMR" id="Q3SRY8"/>
<dbReference type="STRING" id="323098.Nwi_1692"/>
<dbReference type="KEGG" id="nwi:Nwi_1692"/>
<dbReference type="eggNOG" id="COG0238">
    <property type="taxonomic scope" value="Bacteria"/>
</dbReference>
<dbReference type="HOGENOM" id="CLU_148710_2_3_5"/>
<dbReference type="OrthoDB" id="9812008at2"/>
<dbReference type="Proteomes" id="UP000002531">
    <property type="component" value="Chromosome"/>
</dbReference>
<dbReference type="GO" id="GO:0022627">
    <property type="term" value="C:cytosolic small ribosomal subunit"/>
    <property type="evidence" value="ECO:0007669"/>
    <property type="project" value="TreeGrafter"/>
</dbReference>
<dbReference type="GO" id="GO:0070181">
    <property type="term" value="F:small ribosomal subunit rRNA binding"/>
    <property type="evidence" value="ECO:0007669"/>
    <property type="project" value="TreeGrafter"/>
</dbReference>
<dbReference type="GO" id="GO:0003735">
    <property type="term" value="F:structural constituent of ribosome"/>
    <property type="evidence" value="ECO:0007669"/>
    <property type="project" value="InterPro"/>
</dbReference>
<dbReference type="GO" id="GO:0006412">
    <property type="term" value="P:translation"/>
    <property type="evidence" value="ECO:0007669"/>
    <property type="project" value="UniProtKB-UniRule"/>
</dbReference>
<dbReference type="FunFam" id="4.10.640.10:FF:000006">
    <property type="entry name" value="30S ribosomal protein S18"/>
    <property type="match status" value="1"/>
</dbReference>
<dbReference type="Gene3D" id="4.10.640.10">
    <property type="entry name" value="Ribosomal protein S18"/>
    <property type="match status" value="1"/>
</dbReference>
<dbReference type="HAMAP" id="MF_00270">
    <property type="entry name" value="Ribosomal_bS18"/>
    <property type="match status" value="1"/>
</dbReference>
<dbReference type="InterPro" id="IPR001648">
    <property type="entry name" value="Ribosomal_bS18"/>
</dbReference>
<dbReference type="InterPro" id="IPR018275">
    <property type="entry name" value="Ribosomal_bS18_CS"/>
</dbReference>
<dbReference type="InterPro" id="IPR036870">
    <property type="entry name" value="Ribosomal_bS18_sf"/>
</dbReference>
<dbReference type="NCBIfam" id="TIGR00165">
    <property type="entry name" value="S18"/>
    <property type="match status" value="1"/>
</dbReference>
<dbReference type="PANTHER" id="PTHR13479">
    <property type="entry name" value="30S RIBOSOMAL PROTEIN S18"/>
    <property type="match status" value="1"/>
</dbReference>
<dbReference type="PANTHER" id="PTHR13479:SF40">
    <property type="entry name" value="SMALL RIBOSOMAL SUBUNIT PROTEIN BS18M"/>
    <property type="match status" value="1"/>
</dbReference>
<dbReference type="Pfam" id="PF01084">
    <property type="entry name" value="Ribosomal_S18"/>
    <property type="match status" value="1"/>
</dbReference>
<dbReference type="PRINTS" id="PR00974">
    <property type="entry name" value="RIBOSOMALS18"/>
</dbReference>
<dbReference type="SUPFAM" id="SSF46911">
    <property type="entry name" value="Ribosomal protein S18"/>
    <property type="match status" value="1"/>
</dbReference>
<dbReference type="PROSITE" id="PS00057">
    <property type="entry name" value="RIBOSOMAL_S18"/>
    <property type="match status" value="1"/>
</dbReference>
<reference key="1">
    <citation type="journal article" date="2006" name="Appl. Environ. Microbiol.">
        <title>Genome sequence of the chemolithoautotrophic nitrite-oxidizing bacterium Nitrobacter winogradskyi Nb-255.</title>
        <authorList>
            <person name="Starkenburg S.R."/>
            <person name="Chain P.S.G."/>
            <person name="Sayavedra-Soto L.A."/>
            <person name="Hauser L."/>
            <person name="Land M.L."/>
            <person name="Larimer F.W."/>
            <person name="Malfatti S.A."/>
            <person name="Klotz M.G."/>
            <person name="Bottomley P.J."/>
            <person name="Arp D.J."/>
            <person name="Hickey W.J."/>
        </authorList>
    </citation>
    <scope>NUCLEOTIDE SEQUENCE [LARGE SCALE GENOMIC DNA]</scope>
    <source>
        <strain>ATCC 25391 / DSM 10237 / CIP 104748 / NCIMB 11846 / Nb-255</strain>
    </source>
</reference>
<gene>
    <name evidence="1" type="primary">rpsR</name>
    <name type="ordered locus">Nwi_1692</name>
</gene>
<evidence type="ECO:0000255" key="1">
    <source>
        <dbReference type="HAMAP-Rule" id="MF_00270"/>
    </source>
</evidence>
<evidence type="ECO:0000305" key="2"/>
<feature type="chain" id="PRO_1000003548" description="Small ribosomal subunit protein bS18">
    <location>
        <begin position="1"/>
        <end position="79"/>
    </location>
</feature>
<name>RS18_NITWN</name>
<comment type="function">
    <text evidence="1">Binds as a heterodimer with protein bS6 to the central domain of the 16S rRNA, where it helps stabilize the platform of the 30S subunit.</text>
</comment>
<comment type="subunit">
    <text evidence="1">Part of the 30S ribosomal subunit. Forms a tight heterodimer with protein bS6.</text>
</comment>
<comment type="similarity">
    <text evidence="1">Belongs to the bacterial ribosomal protein bS18 family.</text>
</comment>
<proteinExistence type="inferred from homology"/>